<name>NRDR_BRUAB</name>
<dbReference type="EMBL" id="AE017223">
    <property type="protein sequence ID" value="AAX74150.1"/>
    <property type="molecule type" value="Genomic_DNA"/>
</dbReference>
<dbReference type="RefSeq" id="WP_002966765.1">
    <property type="nucleotide sequence ID" value="NC_006932.1"/>
</dbReference>
<dbReference type="SMR" id="Q57DY4"/>
<dbReference type="EnsemblBacteria" id="AAX74150">
    <property type="protein sequence ID" value="AAX74150"/>
    <property type="gene ID" value="BruAb1_0782"/>
</dbReference>
<dbReference type="GeneID" id="93016844"/>
<dbReference type="KEGG" id="bmb:BruAb1_0782"/>
<dbReference type="HOGENOM" id="CLU_108412_0_1_5"/>
<dbReference type="Proteomes" id="UP000000540">
    <property type="component" value="Chromosome I"/>
</dbReference>
<dbReference type="GO" id="GO:0005524">
    <property type="term" value="F:ATP binding"/>
    <property type="evidence" value="ECO:0007669"/>
    <property type="project" value="UniProtKB-KW"/>
</dbReference>
<dbReference type="GO" id="GO:0003677">
    <property type="term" value="F:DNA binding"/>
    <property type="evidence" value="ECO:0007669"/>
    <property type="project" value="UniProtKB-KW"/>
</dbReference>
<dbReference type="GO" id="GO:0008270">
    <property type="term" value="F:zinc ion binding"/>
    <property type="evidence" value="ECO:0007669"/>
    <property type="project" value="UniProtKB-UniRule"/>
</dbReference>
<dbReference type="GO" id="GO:0045892">
    <property type="term" value="P:negative regulation of DNA-templated transcription"/>
    <property type="evidence" value="ECO:0007669"/>
    <property type="project" value="UniProtKB-UniRule"/>
</dbReference>
<dbReference type="HAMAP" id="MF_00440">
    <property type="entry name" value="NrdR"/>
    <property type="match status" value="1"/>
</dbReference>
<dbReference type="InterPro" id="IPR005144">
    <property type="entry name" value="ATP-cone_dom"/>
</dbReference>
<dbReference type="InterPro" id="IPR055173">
    <property type="entry name" value="NrdR-like_N"/>
</dbReference>
<dbReference type="InterPro" id="IPR003796">
    <property type="entry name" value="RNR_NrdR-like"/>
</dbReference>
<dbReference type="NCBIfam" id="TIGR00244">
    <property type="entry name" value="transcriptional regulator NrdR"/>
    <property type="match status" value="1"/>
</dbReference>
<dbReference type="PANTHER" id="PTHR30455">
    <property type="entry name" value="TRANSCRIPTIONAL REPRESSOR NRDR"/>
    <property type="match status" value="1"/>
</dbReference>
<dbReference type="PANTHER" id="PTHR30455:SF2">
    <property type="entry name" value="TRANSCRIPTIONAL REPRESSOR NRDR"/>
    <property type="match status" value="1"/>
</dbReference>
<dbReference type="Pfam" id="PF03477">
    <property type="entry name" value="ATP-cone"/>
    <property type="match status" value="1"/>
</dbReference>
<dbReference type="Pfam" id="PF22811">
    <property type="entry name" value="Zn_ribbon_NrdR"/>
    <property type="match status" value="1"/>
</dbReference>
<dbReference type="PROSITE" id="PS51161">
    <property type="entry name" value="ATP_CONE"/>
    <property type="match status" value="1"/>
</dbReference>
<reference key="1">
    <citation type="journal article" date="2005" name="J. Bacteriol.">
        <title>Completion of the genome sequence of Brucella abortus and comparison to the highly similar genomes of Brucella melitensis and Brucella suis.</title>
        <authorList>
            <person name="Halling S.M."/>
            <person name="Peterson-Burch B.D."/>
            <person name="Bricker B.J."/>
            <person name="Zuerner R.L."/>
            <person name="Qing Z."/>
            <person name="Li L.-L."/>
            <person name="Kapur V."/>
            <person name="Alt D.P."/>
            <person name="Olsen S.C."/>
        </authorList>
    </citation>
    <scope>NUCLEOTIDE SEQUENCE [LARGE SCALE GENOMIC DNA]</scope>
    <source>
        <strain>9-941</strain>
    </source>
</reference>
<evidence type="ECO:0000255" key="1">
    <source>
        <dbReference type="HAMAP-Rule" id="MF_00440"/>
    </source>
</evidence>
<keyword id="KW-0067">ATP-binding</keyword>
<keyword id="KW-0238">DNA-binding</keyword>
<keyword id="KW-0479">Metal-binding</keyword>
<keyword id="KW-0547">Nucleotide-binding</keyword>
<keyword id="KW-0678">Repressor</keyword>
<keyword id="KW-0804">Transcription</keyword>
<keyword id="KW-0805">Transcription regulation</keyword>
<keyword id="KW-0862">Zinc</keyword>
<keyword id="KW-0863">Zinc-finger</keyword>
<feature type="chain" id="PRO_0000230856" description="Transcriptional repressor NrdR">
    <location>
        <begin position="1"/>
        <end position="158"/>
    </location>
</feature>
<feature type="domain" description="ATP-cone" evidence="1">
    <location>
        <begin position="49"/>
        <end position="139"/>
    </location>
</feature>
<feature type="zinc finger region" evidence="1">
    <location>
        <begin position="3"/>
        <end position="34"/>
    </location>
</feature>
<sequence>MRCPYCQSEDTQVKDSRPAEDGAVIRRRRVCSVCGGRFTTFERVQLRDLMVVKKSGRRVPFDRDKLTRSIEVALRKRDVDSERVERAISGIVRQLESAGEAEVTSDEIGRLAMDALKGIDDIAYIRFASVYRNFSKAVDFHNVIDELTVSETGDNLET</sequence>
<gene>
    <name evidence="1" type="primary">nrdR</name>
    <name type="ordered locus">BruAb1_0782</name>
</gene>
<proteinExistence type="inferred from homology"/>
<organism>
    <name type="scientific">Brucella abortus biovar 1 (strain 9-941)</name>
    <dbReference type="NCBI Taxonomy" id="262698"/>
    <lineage>
        <taxon>Bacteria</taxon>
        <taxon>Pseudomonadati</taxon>
        <taxon>Pseudomonadota</taxon>
        <taxon>Alphaproteobacteria</taxon>
        <taxon>Hyphomicrobiales</taxon>
        <taxon>Brucellaceae</taxon>
        <taxon>Brucella/Ochrobactrum group</taxon>
        <taxon>Brucella</taxon>
    </lineage>
</organism>
<accession>Q57DY4</accession>
<comment type="function">
    <text evidence="1">Negatively regulates transcription of bacterial ribonucleotide reductase nrd genes and operons by binding to NrdR-boxes.</text>
</comment>
<comment type="cofactor">
    <cofactor evidence="1">
        <name>Zn(2+)</name>
        <dbReference type="ChEBI" id="CHEBI:29105"/>
    </cofactor>
    <text evidence="1">Binds 1 zinc ion.</text>
</comment>
<comment type="similarity">
    <text evidence="1">Belongs to the NrdR family.</text>
</comment>
<protein>
    <recommendedName>
        <fullName evidence="1">Transcriptional repressor NrdR</fullName>
    </recommendedName>
</protein>